<feature type="chain" id="PRO_1000051305" description="Small ribosomal subunit protein uS9">
    <location>
        <begin position="1"/>
        <end position="130"/>
    </location>
</feature>
<sequence length="130" mass="14288">MIGEWNNGTGRRKSSVARVFLKKGSGQIVVNGKAIEKFFGRATSIMICKQPLLLTNHAETFDIMVNVAGGGESGQAGAVRHGITRALIDYDATLKPELSKAGFVTRDAREVERKKVGFHGARRRKQFSKR</sequence>
<protein>
    <recommendedName>
        <fullName evidence="1">Small ribosomal subunit protein uS9</fullName>
    </recommendedName>
    <alternativeName>
        <fullName evidence="2">30S ribosomal protein S9</fullName>
    </alternativeName>
</protein>
<name>RS9_ALBFT</name>
<reference key="1">
    <citation type="submission" date="2006-02" db="EMBL/GenBank/DDBJ databases">
        <title>Complete sequence of chromosome of Rhodoferax ferrireducens DSM 15236.</title>
        <authorList>
            <person name="Copeland A."/>
            <person name="Lucas S."/>
            <person name="Lapidus A."/>
            <person name="Barry K."/>
            <person name="Detter J.C."/>
            <person name="Glavina del Rio T."/>
            <person name="Hammon N."/>
            <person name="Israni S."/>
            <person name="Pitluck S."/>
            <person name="Brettin T."/>
            <person name="Bruce D."/>
            <person name="Han C."/>
            <person name="Tapia R."/>
            <person name="Gilna P."/>
            <person name="Kiss H."/>
            <person name="Schmutz J."/>
            <person name="Larimer F."/>
            <person name="Land M."/>
            <person name="Kyrpides N."/>
            <person name="Ivanova N."/>
            <person name="Richardson P."/>
        </authorList>
    </citation>
    <scope>NUCLEOTIDE SEQUENCE [LARGE SCALE GENOMIC DNA]</scope>
    <source>
        <strain>ATCC BAA-621 / DSM 15236 / T118</strain>
    </source>
</reference>
<gene>
    <name evidence="1" type="primary">rpsI</name>
    <name type="ordered locus">Rfer_0722</name>
</gene>
<proteinExistence type="inferred from homology"/>
<dbReference type="EMBL" id="CP000267">
    <property type="protein sequence ID" value="ABD68472.1"/>
    <property type="molecule type" value="Genomic_DNA"/>
</dbReference>
<dbReference type="RefSeq" id="WP_011463045.1">
    <property type="nucleotide sequence ID" value="NC_007908.1"/>
</dbReference>
<dbReference type="SMR" id="Q220T1"/>
<dbReference type="STRING" id="338969.Rfer_0722"/>
<dbReference type="KEGG" id="rfr:Rfer_0722"/>
<dbReference type="eggNOG" id="COG0103">
    <property type="taxonomic scope" value="Bacteria"/>
</dbReference>
<dbReference type="HOGENOM" id="CLU_046483_2_1_4"/>
<dbReference type="OrthoDB" id="9803965at2"/>
<dbReference type="Proteomes" id="UP000008332">
    <property type="component" value="Chromosome"/>
</dbReference>
<dbReference type="GO" id="GO:0022627">
    <property type="term" value="C:cytosolic small ribosomal subunit"/>
    <property type="evidence" value="ECO:0007669"/>
    <property type="project" value="TreeGrafter"/>
</dbReference>
<dbReference type="GO" id="GO:0003723">
    <property type="term" value="F:RNA binding"/>
    <property type="evidence" value="ECO:0007669"/>
    <property type="project" value="TreeGrafter"/>
</dbReference>
<dbReference type="GO" id="GO:0003735">
    <property type="term" value="F:structural constituent of ribosome"/>
    <property type="evidence" value="ECO:0007669"/>
    <property type="project" value="InterPro"/>
</dbReference>
<dbReference type="GO" id="GO:0006412">
    <property type="term" value="P:translation"/>
    <property type="evidence" value="ECO:0007669"/>
    <property type="project" value="UniProtKB-UniRule"/>
</dbReference>
<dbReference type="FunFam" id="3.30.230.10:FF:000001">
    <property type="entry name" value="30S ribosomal protein S9"/>
    <property type="match status" value="1"/>
</dbReference>
<dbReference type="Gene3D" id="3.30.230.10">
    <property type="match status" value="1"/>
</dbReference>
<dbReference type="HAMAP" id="MF_00532_B">
    <property type="entry name" value="Ribosomal_uS9_B"/>
    <property type="match status" value="1"/>
</dbReference>
<dbReference type="InterPro" id="IPR020568">
    <property type="entry name" value="Ribosomal_Su5_D2-typ_SF"/>
</dbReference>
<dbReference type="InterPro" id="IPR000754">
    <property type="entry name" value="Ribosomal_uS9"/>
</dbReference>
<dbReference type="InterPro" id="IPR023035">
    <property type="entry name" value="Ribosomal_uS9_bac/plastid"/>
</dbReference>
<dbReference type="InterPro" id="IPR020574">
    <property type="entry name" value="Ribosomal_uS9_CS"/>
</dbReference>
<dbReference type="InterPro" id="IPR014721">
    <property type="entry name" value="Ribsml_uS5_D2-typ_fold_subgr"/>
</dbReference>
<dbReference type="NCBIfam" id="NF001099">
    <property type="entry name" value="PRK00132.1"/>
    <property type="match status" value="1"/>
</dbReference>
<dbReference type="PANTHER" id="PTHR21569">
    <property type="entry name" value="RIBOSOMAL PROTEIN S9"/>
    <property type="match status" value="1"/>
</dbReference>
<dbReference type="PANTHER" id="PTHR21569:SF1">
    <property type="entry name" value="SMALL RIBOSOMAL SUBUNIT PROTEIN US9M"/>
    <property type="match status" value="1"/>
</dbReference>
<dbReference type="Pfam" id="PF00380">
    <property type="entry name" value="Ribosomal_S9"/>
    <property type="match status" value="1"/>
</dbReference>
<dbReference type="SUPFAM" id="SSF54211">
    <property type="entry name" value="Ribosomal protein S5 domain 2-like"/>
    <property type="match status" value="1"/>
</dbReference>
<dbReference type="PROSITE" id="PS00360">
    <property type="entry name" value="RIBOSOMAL_S9"/>
    <property type="match status" value="1"/>
</dbReference>
<comment type="similarity">
    <text evidence="1">Belongs to the universal ribosomal protein uS9 family.</text>
</comment>
<accession>Q220T1</accession>
<keyword id="KW-1185">Reference proteome</keyword>
<keyword id="KW-0687">Ribonucleoprotein</keyword>
<keyword id="KW-0689">Ribosomal protein</keyword>
<organism>
    <name type="scientific">Albidiferax ferrireducens (strain ATCC BAA-621 / DSM 15236 / T118)</name>
    <name type="common">Rhodoferax ferrireducens</name>
    <dbReference type="NCBI Taxonomy" id="338969"/>
    <lineage>
        <taxon>Bacteria</taxon>
        <taxon>Pseudomonadati</taxon>
        <taxon>Pseudomonadota</taxon>
        <taxon>Betaproteobacteria</taxon>
        <taxon>Burkholderiales</taxon>
        <taxon>Comamonadaceae</taxon>
        <taxon>Rhodoferax</taxon>
    </lineage>
</organism>
<evidence type="ECO:0000255" key="1">
    <source>
        <dbReference type="HAMAP-Rule" id="MF_00532"/>
    </source>
</evidence>
<evidence type="ECO:0000305" key="2"/>